<feature type="chain" id="PRO_0000159649" description="Plasma membrane iron permease">
    <location>
        <begin position="1"/>
        <end position="404"/>
    </location>
</feature>
<feature type="transmembrane region" description="Helical" evidence="1">
    <location>
        <begin position="8"/>
        <end position="28"/>
    </location>
</feature>
<feature type="transmembrane region" description="Helical" evidence="1">
    <location>
        <begin position="51"/>
        <end position="71"/>
    </location>
</feature>
<feature type="transmembrane region" description="Helical" evidence="1">
    <location>
        <begin position="87"/>
        <end position="107"/>
    </location>
</feature>
<feature type="transmembrane region" description="Helical" evidence="1">
    <location>
        <begin position="147"/>
        <end position="167"/>
    </location>
</feature>
<feature type="transmembrane region" description="Helical" evidence="1">
    <location>
        <begin position="183"/>
        <end position="203"/>
    </location>
</feature>
<feature type="transmembrane region" description="Helical" evidence="1">
    <location>
        <begin position="207"/>
        <end position="227"/>
    </location>
</feature>
<feature type="transmembrane region" description="Helical" evidence="1">
    <location>
        <begin position="294"/>
        <end position="314"/>
    </location>
</feature>
<sequence length="404" mass="45722">MPNKVFNVAVFFVVFRECLEAVIVISVLLSFLKQAIGEHDRALYRKLRIQVWVGVLLGFIICLAIGAGFIGAYYSLQKDIFGSAEDLWEGIFCMIATIMISMMGIPMLRMNKMQSKWRVKIARSLVEIPHRKRDYFKIGFLSRRYAMFLLPFITVLREGLEAVVFVAGAGITTQGSHASAYPLPVVVGLICGGLVGYLLYYGASKSSLQIFLILSTSILYLISAGLFSRGAWYFENYRFNLASGGDASEGGDGNGSYNIRKAVYHVNCCNPELDNGWDIFNALLGWQNTGYLSSMLCYNIYWLVLIIVLSLMIFEERRGHLPFTKNLQLKHLNPGYWIKNKKKQELTEEQKRQLFAKMENINFNEDGEINVQENYELPEQTTSHSSSQNVATDKEVLHVKADSL</sequence>
<reference key="1">
    <citation type="journal article" date="1997" name="Nature">
        <title>The nucleotide sequence of Saccharomyces cerevisiae chromosome V.</title>
        <authorList>
            <person name="Dietrich F.S."/>
            <person name="Mulligan J.T."/>
            <person name="Hennessy K.M."/>
            <person name="Yelton M.A."/>
            <person name="Allen E."/>
            <person name="Araujo R."/>
            <person name="Aviles E."/>
            <person name="Berno A."/>
            <person name="Brennan T."/>
            <person name="Carpenter J."/>
            <person name="Chen E."/>
            <person name="Cherry J.M."/>
            <person name="Chung E."/>
            <person name="Duncan M."/>
            <person name="Guzman E."/>
            <person name="Hartzell G."/>
            <person name="Hunicke-Smith S."/>
            <person name="Hyman R.W."/>
            <person name="Kayser A."/>
            <person name="Komp C."/>
            <person name="Lashkari D."/>
            <person name="Lew H."/>
            <person name="Lin D."/>
            <person name="Mosedale D."/>
            <person name="Nakahara K."/>
            <person name="Namath A."/>
            <person name="Norgren R."/>
            <person name="Oefner P."/>
            <person name="Oh C."/>
            <person name="Petel F.X."/>
            <person name="Roberts D."/>
            <person name="Sehl P."/>
            <person name="Schramm S."/>
            <person name="Shogren T."/>
            <person name="Smith V."/>
            <person name="Taylor P."/>
            <person name="Wei Y."/>
            <person name="Botstein D."/>
            <person name="Davis R.W."/>
        </authorList>
    </citation>
    <scope>NUCLEOTIDE SEQUENCE [LARGE SCALE GENOMIC DNA]</scope>
    <source>
        <strain>ATCC 204508 / S288c</strain>
    </source>
</reference>
<reference key="2">
    <citation type="journal article" date="2014" name="G3 (Bethesda)">
        <title>The reference genome sequence of Saccharomyces cerevisiae: Then and now.</title>
        <authorList>
            <person name="Engel S.R."/>
            <person name="Dietrich F.S."/>
            <person name="Fisk D.G."/>
            <person name="Binkley G."/>
            <person name="Balakrishnan R."/>
            <person name="Costanzo M.C."/>
            <person name="Dwight S.S."/>
            <person name="Hitz B.C."/>
            <person name="Karra K."/>
            <person name="Nash R.S."/>
            <person name="Weng S."/>
            <person name="Wong E.D."/>
            <person name="Lloyd P."/>
            <person name="Skrzypek M.S."/>
            <person name="Miyasato S.R."/>
            <person name="Simison M."/>
            <person name="Cherry J.M."/>
        </authorList>
    </citation>
    <scope>GENOME REANNOTATION</scope>
    <source>
        <strain>ATCC 204508 / S288c</strain>
    </source>
</reference>
<reference key="3">
    <citation type="journal article" date="1996" name="Science">
        <title>A permease-oxidase complex involved in high-affinity iron uptake in yeast.</title>
        <authorList>
            <person name="Stearman R."/>
            <person name="Yuan D.S."/>
            <person name="Yamaguchi-Iwai Y."/>
            <person name="Klausner R.D."/>
            <person name="Dancis A."/>
        </authorList>
    </citation>
    <scope>CHARACTERIZATION</scope>
</reference>
<reference key="4">
    <citation type="journal article" date="2003" name="Nature">
        <title>Global analysis of protein expression in yeast.</title>
        <authorList>
            <person name="Ghaemmaghami S."/>
            <person name="Huh W.-K."/>
            <person name="Bower K."/>
            <person name="Howson R.W."/>
            <person name="Belle A."/>
            <person name="Dephoure N."/>
            <person name="O'Shea E.K."/>
            <person name="Weissman J.S."/>
        </authorList>
    </citation>
    <scope>LEVEL OF PROTEIN EXPRESSION [LARGE SCALE ANALYSIS]</scope>
</reference>
<protein>
    <recommendedName>
        <fullName>Plasma membrane iron permease</fullName>
    </recommendedName>
</protein>
<dbReference type="EMBL" id="U18917">
    <property type="protein sequence ID" value="AAB64672.1"/>
    <property type="molecule type" value="Genomic_DNA"/>
</dbReference>
<dbReference type="EMBL" id="BK006939">
    <property type="protein sequence ID" value="DAA07806.1"/>
    <property type="molecule type" value="Genomic_DNA"/>
</dbReference>
<dbReference type="PIR" id="S50648">
    <property type="entry name" value="S50648"/>
</dbReference>
<dbReference type="RefSeq" id="NP_011072.1">
    <property type="nucleotide sequence ID" value="NM_001179035.1"/>
</dbReference>
<dbReference type="BioGRID" id="36894">
    <property type="interactions" value="111"/>
</dbReference>
<dbReference type="ComplexPortal" id="CPX-868">
    <property type="entry name" value="FET3-FTR1 high affinity iron permease complex"/>
</dbReference>
<dbReference type="DIP" id="DIP-5376N"/>
<dbReference type="FunCoup" id="P40088">
    <property type="interactions" value="124"/>
</dbReference>
<dbReference type="IntAct" id="P40088">
    <property type="interactions" value="28"/>
</dbReference>
<dbReference type="MINT" id="P40088"/>
<dbReference type="STRING" id="4932.YER145C"/>
<dbReference type="TCDB" id="2.A.108.1.1">
    <property type="family name" value="the iron/lead transporter (ilt) family"/>
</dbReference>
<dbReference type="iPTMnet" id="P40088"/>
<dbReference type="PaxDb" id="4932-YER145C"/>
<dbReference type="PeptideAtlas" id="P40088"/>
<dbReference type="EnsemblFungi" id="YER145C_mRNA">
    <property type="protein sequence ID" value="YER145C"/>
    <property type="gene ID" value="YER145C"/>
</dbReference>
<dbReference type="GeneID" id="856888"/>
<dbReference type="KEGG" id="sce:YER145C"/>
<dbReference type="AGR" id="SGD:S000000947"/>
<dbReference type="SGD" id="S000000947">
    <property type="gene designation" value="FTR1"/>
</dbReference>
<dbReference type="VEuPathDB" id="FungiDB:YER145C"/>
<dbReference type="eggNOG" id="ENOG502QQWE">
    <property type="taxonomic scope" value="Eukaryota"/>
</dbReference>
<dbReference type="GeneTree" id="ENSGT00940000176478"/>
<dbReference type="HOGENOM" id="CLU_046738_1_1_1"/>
<dbReference type="InParanoid" id="P40088"/>
<dbReference type="OMA" id="SVWHLDC"/>
<dbReference type="OrthoDB" id="4364at2759"/>
<dbReference type="BioCyc" id="YEAST:G3O-30306-MONOMER"/>
<dbReference type="BioGRID-ORCS" id="856888">
    <property type="hits" value="5 hits in 10 CRISPR screens"/>
</dbReference>
<dbReference type="PRO" id="PR:P40088"/>
<dbReference type="Proteomes" id="UP000002311">
    <property type="component" value="Chromosome V"/>
</dbReference>
<dbReference type="RNAct" id="P40088">
    <property type="molecule type" value="protein"/>
</dbReference>
<dbReference type="GO" id="GO:0033573">
    <property type="term" value="C:high-affinity iron permease complex"/>
    <property type="evidence" value="ECO:0000314"/>
    <property type="project" value="SGD"/>
</dbReference>
<dbReference type="GO" id="GO:0005886">
    <property type="term" value="C:plasma membrane"/>
    <property type="evidence" value="ECO:0000314"/>
    <property type="project" value="SGD"/>
</dbReference>
<dbReference type="GO" id="GO:0015093">
    <property type="term" value="F:ferrous iron transmembrane transporter activity"/>
    <property type="evidence" value="ECO:0000318"/>
    <property type="project" value="GO_Central"/>
</dbReference>
<dbReference type="GO" id="GO:0005381">
    <property type="term" value="F:iron ion transmembrane transporter activity"/>
    <property type="evidence" value="ECO:0000314"/>
    <property type="project" value="SGD"/>
</dbReference>
<dbReference type="GO" id="GO:1901684">
    <property type="term" value="P:arsenate ion transmembrane transport"/>
    <property type="evidence" value="ECO:0000316"/>
    <property type="project" value="SGD"/>
</dbReference>
<dbReference type="GO" id="GO:0098706">
    <property type="term" value="P:iron ion import across cell outer membrane"/>
    <property type="evidence" value="ECO:0000314"/>
    <property type="project" value="ComplexPortal"/>
</dbReference>
<dbReference type="GO" id="GO:0034755">
    <property type="term" value="P:iron ion transmembrane transport"/>
    <property type="evidence" value="ECO:0000315"/>
    <property type="project" value="SGD"/>
</dbReference>
<dbReference type="InterPro" id="IPR005217">
    <property type="entry name" value="EfeU/FTR1-like"/>
</dbReference>
<dbReference type="InterPro" id="IPR004923">
    <property type="entry name" value="FTR1/Fip1/EfeU"/>
</dbReference>
<dbReference type="NCBIfam" id="TIGR00145">
    <property type="entry name" value="EfeU/Ftr1 family ferrous iron transporter subunit"/>
    <property type="match status" value="1"/>
</dbReference>
<dbReference type="PANTHER" id="PTHR31632">
    <property type="entry name" value="IRON TRANSPORTER FTH1"/>
    <property type="match status" value="1"/>
</dbReference>
<dbReference type="PANTHER" id="PTHR31632:SF2">
    <property type="entry name" value="PLASMA MEMBRANE IRON PERMEASE"/>
    <property type="match status" value="1"/>
</dbReference>
<dbReference type="Pfam" id="PF03239">
    <property type="entry name" value="FTR1"/>
    <property type="match status" value="1"/>
</dbReference>
<organism>
    <name type="scientific">Saccharomyces cerevisiae (strain ATCC 204508 / S288c)</name>
    <name type="common">Baker's yeast</name>
    <dbReference type="NCBI Taxonomy" id="559292"/>
    <lineage>
        <taxon>Eukaryota</taxon>
        <taxon>Fungi</taxon>
        <taxon>Dikarya</taxon>
        <taxon>Ascomycota</taxon>
        <taxon>Saccharomycotina</taxon>
        <taxon>Saccharomycetes</taxon>
        <taxon>Saccharomycetales</taxon>
        <taxon>Saccharomycetaceae</taxon>
        <taxon>Saccharomyces</taxon>
    </lineage>
</organism>
<proteinExistence type="evidence at protein level"/>
<accession>P40088</accession>
<accession>D3DM52</accession>
<keyword id="KW-0406">Ion transport</keyword>
<keyword id="KW-0408">Iron</keyword>
<keyword id="KW-0410">Iron transport</keyword>
<keyword id="KW-0472">Membrane</keyword>
<keyword id="KW-1185">Reference proteome</keyword>
<keyword id="KW-0812">Transmembrane</keyword>
<keyword id="KW-1133">Transmembrane helix</keyword>
<keyword id="KW-0813">Transport</keyword>
<evidence type="ECO:0000255" key="1"/>
<evidence type="ECO:0000269" key="2">
    <source>
    </source>
</evidence>
<evidence type="ECO:0000305" key="3"/>
<comment type="function">
    <text>Permease for high affinity iron uptake.</text>
</comment>
<comment type="interaction">
    <interactant intactId="EBI-7138">
        <id>P40088</id>
    </interactant>
    <interactant intactId="EBI-6876">
        <id>P38993</id>
        <label>FET3</label>
    </interactant>
    <organismsDiffer>false</organismsDiffer>
    <experiments>6</experiments>
</comment>
<comment type="subcellular location">
    <subcellularLocation>
        <location evidence="3">Membrane</location>
        <topology evidence="3">Multi-pass membrane protein</topology>
    </subcellularLocation>
</comment>
<comment type="miscellaneous">
    <text evidence="2">Present with 8370 molecules/cell in log phase SD medium.</text>
</comment>
<comment type="similarity">
    <text evidence="3">Belongs to the oxidase-dependent Fe transporter (OFeT) (TC 9.A.10.1) family.</text>
</comment>
<name>FTR1_YEAST</name>
<gene>
    <name type="primary">FTR1</name>
    <name type="ordered locus">YER145C</name>
</gene>